<comment type="function">
    <text evidence="6">May regulate epithelial calcium transport by inhibiting TRPV5 activity.</text>
</comment>
<comment type="subunit">
    <text evidence="1 6">Interacts with YWHAZ/14-3-3 protein zeta (By similarity). Interacts with TRPV5 and TRPV6.</text>
</comment>
<comment type="subcellular location">
    <subcellularLocation>
        <location evidence="6">Cytoplasm</location>
    </subcellularLocation>
    <subcellularLocation>
        <location evidence="6">Membrane</location>
        <topology evidence="6">Peripheral membrane protein</topology>
    </subcellularLocation>
    <text>Apical domain of kidney distal tubular cells.</text>
</comment>
<comment type="alternative products">
    <event type="alternative splicing"/>
    <isoform>
        <id>Q80YW5-1</id>
        <name>1</name>
        <sequence type="displayed"/>
    </isoform>
    <isoform>
        <id>Q80YW5-2</id>
        <name>2</name>
        <sequence type="described" ref="VSP_019529"/>
    </isoform>
</comment>
<comment type="tissue specificity">
    <text evidence="4 6">According to PubMed:10978534, testis-specific. According to PubMed:16371431, broadly expressed.</text>
</comment>
<comment type="developmental stage">
    <text evidence="5">Expression starts at 19 dpc in brain.</text>
</comment>
<comment type="induction">
    <text evidence="6">Down-regulated by vitamin D.</text>
</comment>
<sequence length="473" mass="52751">MSADVSGTESGSESGPEPEPGPEPGPESRPESRPKPGPGPEPRPESGPEPGPRSGLRRGPKQGSERSQLCPEHFEPLSWFCLSERRPVCATCAGFGGRCHRHRIRRAEEHAEELRNKIVDQCERLQLQSAGISKYMAEVLQGKNQKAVVMASAARDLIIQRLSLVRSLCESEEQRLLEQVHGEEERAHQSILTQRAHWVDAVQKLDTLRTNMVDMITHLDDLQLIQREQEIFERAEEAEGILDPQDSEKLSFNEKCAWSPLLTQLWAASVLGSLSGVEEVLIDERTVSPLLHLSEDRRTLTFIAKKSKVCSDEPERFDHWPNALAATAFQTGLHAWIVNVKHSCAYKVGVASDQLPRKGSGNDCRLGHNAFSWVFSRYDQEFCFSHNGYHEPLPLLRCPAQLGMLLDLQAGELVFYEPASGTVLHIHRASFPQVLFPVFAVADQLISIVRGPLATVRLDSPPHHPCRSGHASR</sequence>
<dbReference type="EMBL" id="AJ276690">
    <property type="protein sequence ID" value="CAC09325.1"/>
    <property type="molecule type" value="mRNA"/>
</dbReference>
<dbReference type="EMBL" id="AK035588">
    <property type="protein sequence ID" value="BAC29115.1"/>
    <property type="molecule type" value="mRNA"/>
</dbReference>
<dbReference type="EMBL" id="AK160930">
    <property type="protein sequence ID" value="BAE36097.1"/>
    <property type="molecule type" value="mRNA"/>
</dbReference>
<dbReference type="EMBL" id="AL732594">
    <property type="status" value="NOT_ANNOTATED_CDS"/>
    <property type="molecule type" value="Genomic_DNA"/>
</dbReference>
<dbReference type="EMBL" id="BC003992">
    <property type="protein sequence ID" value="AAH03992.2"/>
    <property type="molecule type" value="mRNA"/>
</dbReference>
<dbReference type="CCDS" id="CCDS18241.1">
    <molecule id="Q80YW5-2"/>
</dbReference>
<dbReference type="CCDS" id="CCDS89757.1">
    <molecule id="Q80YW5-1"/>
</dbReference>
<dbReference type="RefSeq" id="NP_001355552.1">
    <molecule id="Q80YW5-1"/>
    <property type="nucleotide sequence ID" value="NM_001368623.1"/>
</dbReference>
<dbReference type="RefSeq" id="NP_619594.1">
    <molecule id="Q80YW5-2"/>
    <property type="nucleotide sequence ID" value="NM_138653.2"/>
</dbReference>
<dbReference type="SMR" id="Q80YW5"/>
<dbReference type="BioGRID" id="228643">
    <property type="interactions" value="1"/>
</dbReference>
<dbReference type="FunCoup" id="Q80YW5">
    <property type="interactions" value="171"/>
</dbReference>
<dbReference type="IntAct" id="Q80YW5">
    <property type="interactions" value="1"/>
</dbReference>
<dbReference type="MINT" id="Q80YW5"/>
<dbReference type="STRING" id="10090.ENSMUSP00000030088"/>
<dbReference type="PhosphoSitePlus" id="Q80YW5"/>
<dbReference type="SwissPalm" id="Q80YW5"/>
<dbReference type="PaxDb" id="10090-ENSMUSP00000030088"/>
<dbReference type="ProteomicsDB" id="265247">
    <molecule id="Q80YW5-1"/>
</dbReference>
<dbReference type="ProteomicsDB" id="265248">
    <molecule id="Q80YW5-2"/>
</dbReference>
<dbReference type="Antibodypedia" id="29777">
    <property type="antibodies" value="50 antibodies from 12 providers"/>
</dbReference>
<dbReference type="DNASU" id="192120"/>
<dbReference type="Ensembl" id="ENSMUST00000030088.12">
    <molecule id="Q80YW5-2"/>
    <property type="protein sequence ID" value="ENSMUSP00000030088.6"/>
    <property type="gene ID" value="ENSMUSG00000028392.16"/>
</dbReference>
<dbReference type="Ensembl" id="ENSMUST00000107449.4">
    <molecule id="Q80YW5-1"/>
    <property type="protein sequence ID" value="ENSMUSP00000103073.4"/>
    <property type="gene ID" value="ENSMUSG00000028392.16"/>
</dbReference>
<dbReference type="GeneID" id="192120"/>
<dbReference type="KEGG" id="mmu:192120"/>
<dbReference type="UCSC" id="uc008tex.1">
    <molecule id="Q80YW5-1"/>
    <property type="organism name" value="mouse"/>
</dbReference>
<dbReference type="AGR" id="MGI:2177191"/>
<dbReference type="CTD" id="54836"/>
<dbReference type="MGI" id="MGI:2177191">
    <property type="gene designation" value="Bspry"/>
</dbReference>
<dbReference type="VEuPathDB" id="HostDB:ENSMUSG00000028392"/>
<dbReference type="eggNOG" id="KOG2177">
    <property type="taxonomic scope" value="Eukaryota"/>
</dbReference>
<dbReference type="GeneTree" id="ENSGT00940000161096"/>
<dbReference type="HOGENOM" id="CLU_050384_0_0_1"/>
<dbReference type="InParanoid" id="Q80YW5"/>
<dbReference type="OMA" id="NEARLGH"/>
<dbReference type="OrthoDB" id="9875313at2759"/>
<dbReference type="TreeFam" id="TF351014"/>
<dbReference type="BioGRID-ORCS" id="192120">
    <property type="hits" value="2 hits in 76 CRISPR screens"/>
</dbReference>
<dbReference type="ChiTaRS" id="Bspry">
    <property type="organism name" value="mouse"/>
</dbReference>
<dbReference type="PRO" id="PR:Q80YW5"/>
<dbReference type="Proteomes" id="UP000000589">
    <property type="component" value="Chromosome 4"/>
</dbReference>
<dbReference type="RNAct" id="Q80YW5">
    <property type="molecule type" value="protein"/>
</dbReference>
<dbReference type="Bgee" id="ENSMUSG00000028392">
    <property type="expression patterns" value="Expressed in spermatid and 130 other cell types or tissues"/>
</dbReference>
<dbReference type="ExpressionAtlas" id="Q80YW5">
    <property type="expression patterns" value="baseline and differential"/>
</dbReference>
<dbReference type="GO" id="GO:0005737">
    <property type="term" value="C:cytoplasm"/>
    <property type="evidence" value="ECO:0007669"/>
    <property type="project" value="UniProtKB-SubCell"/>
</dbReference>
<dbReference type="GO" id="GO:0016020">
    <property type="term" value="C:membrane"/>
    <property type="evidence" value="ECO:0007669"/>
    <property type="project" value="UniProtKB-SubCell"/>
</dbReference>
<dbReference type="GO" id="GO:0005499">
    <property type="term" value="F:vitamin D binding"/>
    <property type="evidence" value="ECO:0007669"/>
    <property type="project" value="UniProtKB-KW"/>
</dbReference>
<dbReference type="GO" id="GO:0008270">
    <property type="term" value="F:zinc ion binding"/>
    <property type="evidence" value="ECO:0007669"/>
    <property type="project" value="UniProtKB-KW"/>
</dbReference>
<dbReference type="GO" id="GO:0006816">
    <property type="term" value="P:calcium ion transport"/>
    <property type="evidence" value="ECO:0007669"/>
    <property type="project" value="UniProtKB-KW"/>
</dbReference>
<dbReference type="GO" id="GO:1990830">
    <property type="term" value="P:cellular response to leukemia inhibitory factor"/>
    <property type="evidence" value="ECO:0000270"/>
    <property type="project" value="MGI"/>
</dbReference>
<dbReference type="Gene3D" id="2.60.120.920">
    <property type="match status" value="1"/>
</dbReference>
<dbReference type="Gene3D" id="3.30.160.60">
    <property type="entry name" value="Classic Zinc Finger"/>
    <property type="match status" value="1"/>
</dbReference>
<dbReference type="InterPro" id="IPR001870">
    <property type="entry name" value="B30.2/SPRY"/>
</dbReference>
<dbReference type="InterPro" id="IPR043136">
    <property type="entry name" value="B30.2/SPRY_sf"/>
</dbReference>
<dbReference type="InterPro" id="IPR003879">
    <property type="entry name" value="Butyrophylin_SPRY"/>
</dbReference>
<dbReference type="InterPro" id="IPR013320">
    <property type="entry name" value="ConA-like_dom_sf"/>
</dbReference>
<dbReference type="InterPro" id="IPR006574">
    <property type="entry name" value="PRY"/>
</dbReference>
<dbReference type="InterPro" id="IPR003877">
    <property type="entry name" value="SPRY_dom"/>
</dbReference>
<dbReference type="InterPro" id="IPR050143">
    <property type="entry name" value="TRIM/RBCC"/>
</dbReference>
<dbReference type="PANTHER" id="PTHR24103">
    <property type="entry name" value="E3 UBIQUITIN-PROTEIN LIGASE TRIM"/>
    <property type="match status" value="1"/>
</dbReference>
<dbReference type="Pfam" id="PF13765">
    <property type="entry name" value="PRY"/>
    <property type="match status" value="1"/>
</dbReference>
<dbReference type="Pfam" id="PF00622">
    <property type="entry name" value="SPRY"/>
    <property type="match status" value="1"/>
</dbReference>
<dbReference type="PRINTS" id="PR01407">
    <property type="entry name" value="BUTYPHLNCDUF"/>
</dbReference>
<dbReference type="SMART" id="SM00589">
    <property type="entry name" value="PRY"/>
    <property type="match status" value="1"/>
</dbReference>
<dbReference type="SMART" id="SM00449">
    <property type="entry name" value="SPRY"/>
    <property type="match status" value="1"/>
</dbReference>
<dbReference type="SUPFAM" id="SSF57845">
    <property type="entry name" value="B-box zinc-binding domain"/>
    <property type="match status" value="1"/>
</dbReference>
<dbReference type="SUPFAM" id="SSF49899">
    <property type="entry name" value="Concanavalin A-like lectins/glucanases"/>
    <property type="match status" value="1"/>
</dbReference>
<dbReference type="PROSITE" id="PS50188">
    <property type="entry name" value="B302_SPRY"/>
    <property type="match status" value="1"/>
</dbReference>
<organism>
    <name type="scientific">Mus musculus</name>
    <name type="common">Mouse</name>
    <dbReference type="NCBI Taxonomy" id="10090"/>
    <lineage>
        <taxon>Eukaryota</taxon>
        <taxon>Metazoa</taxon>
        <taxon>Chordata</taxon>
        <taxon>Craniata</taxon>
        <taxon>Vertebrata</taxon>
        <taxon>Euteleostomi</taxon>
        <taxon>Mammalia</taxon>
        <taxon>Eutheria</taxon>
        <taxon>Euarchontoglires</taxon>
        <taxon>Glires</taxon>
        <taxon>Rodentia</taxon>
        <taxon>Myomorpha</taxon>
        <taxon>Muroidea</taxon>
        <taxon>Muridae</taxon>
        <taxon>Murinae</taxon>
        <taxon>Mus</taxon>
        <taxon>Mus</taxon>
    </lineage>
</organism>
<reference key="1">
    <citation type="journal article" date="2000" name="Biochim. Biophys. Acta">
        <title>BSPRY, a novel protein of the Ro-Ret family.</title>
        <authorList>
            <person name="Schenker T."/>
            <person name="Trueb B."/>
        </authorList>
    </citation>
    <scope>NUCLEOTIDE SEQUENCE [MRNA] (ISOFORM 2)</scope>
    <scope>TISSUE SPECIFICITY</scope>
</reference>
<reference key="2">
    <citation type="journal article" date="2005" name="Science">
        <title>The transcriptional landscape of the mammalian genome.</title>
        <authorList>
            <person name="Carninci P."/>
            <person name="Kasukawa T."/>
            <person name="Katayama S."/>
            <person name="Gough J."/>
            <person name="Frith M.C."/>
            <person name="Maeda N."/>
            <person name="Oyama R."/>
            <person name="Ravasi T."/>
            <person name="Lenhard B."/>
            <person name="Wells C."/>
            <person name="Kodzius R."/>
            <person name="Shimokawa K."/>
            <person name="Bajic V.B."/>
            <person name="Brenner S.E."/>
            <person name="Batalov S."/>
            <person name="Forrest A.R."/>
            <person name="Zavolan M."/>
            <person name="Davis M.J."/>
            <person name="Wilming L.G."/>
            <person name="Aidinis V."/>
            <person name="Allen J.E."/>
            <person name="Ambesi-Impiombato A."/>
            <person name="Apweiler R."/>
            <person name="Aturaliya R.N."/>
            <person name="Bailey T.L."/>
            <person name="Bansal M."/>
            <person name="Baxter L."/>
            <person name="Beisel K.W."/>
            <person name="Bersano T."/>
            <person name="Bono H."/>
            <person name="Chalk A.M."/>
            <person name="Chiu K.P."/>
            <person name="Choudhary V."/>
            <person name="Christoffels A."/>
            <person name="Clutterbuck D.R."/>
            <person name="Crowe M.L."/>
            <person name="Dalla E."/>
            <person name="Dalrymple B.P."/>
            <person name="de Bono B."/>
            <person name="Della Gatta G."/>
            <person name="di Bernardo D."/>
            <person name="Down T."/>
            <person name="Engstrom P."/>
            <person name="Fagiolini M."/>
            <person name="Faulkner G."/>
            <person name="Fletcher C.F."/>
            <person name="Fukushima T."/>
            <person name="Furuno M."/>
            <person name="Futaki S."/>
            <person name="Gariboldi M."/>
            <person name="Georgii-Hemming P."/>
            <person name="Gingeras T.R."/>
            <person name="Gojobori T."/>
            <person name="Green R.E."/>
            <person name="Gustincich S."/>
            <person name="Harbers M."/>
            <person name="Hayashi Y."/>
            <person name="Hensch T.K."/>
            <person name="Hirokawa N."/>
            <person name="Hill D."/>
            <person name="Huminiecki L."/>
            <person name="Iacono M."/>
            <person name="Ikeo K."/>
            <person name="Iwama A."/>
            <person name="Ishikawa T."/>
            <person name="Jakt M."/>
            <person name="Kanapin A."/>
            <person name="Katoh M."/>
            <person name="Kawasawa Y."/>
            <person name="Kelso J."/>
            <person name="Kitamura H."/>
            <person name="Kitano H."/>
            <person name="Kollias G."/>
            <person name="Krishnan S.P."/>
            <person name="Kruger A."/>
            <person name="Kummerfeld S.K."/>
            <person name="Kurochkin I.V."/>
            <person name="Lareau L.F."/>
            <person name="Lazarevic D."/>
            <person name="Lipovich L."/>
            <person name="Liu J."/>
            <person name="Liuni S."/>
            <person name="McWilliam S."/>
            <person name="Madan Babu M."/>
            <person name="Madera M."/>
            <person name="Marchionni L."/>
            <person name="Matsuda H."/>
            <person name="Matsuzawa S."/>
            <person name="Miki H."/>
            <person name="Mignone F."/>
            <person name="Miyake S."/>
            <person name="Morris K."/>
            <person name="Mottagui-Tabar S."/>
            <person name="Mulder N."/>
            <person name="Nakano N."/>
            <person name="Nakauchi H."/>
            <person name="Ng P."/>
            <person name="Nilsson R."/>
            <person name="Nishiguchi S."/>
            <person name="Nishikawa S."/>
            <person name="Nori F."/>
            <person name="Ohara O."/>
            <person name="Okazaki Y."/>
            <person name="Orlando V."/>
            <person name="Pang K.C."/>
            <person name="Pavan W.J."/>
            <person name="Pavesi G."/>
            <person name="Pesole G."/>
            <person name="Petrovsky N."/>
            <person name="Piazza S."/>
            <person name="Reed J."/>
            <person name="Reid J.F."/>
            <person name="Ring B.Z."/>
            <person name="Ringwald M."/>
            <person name="Rost B."/>
            <person name="Ruan Y."/>
            <person name="Salzberg S.L."/>
            <person name="Sandelin A."/>
            <person name="Schneider C."/>
            <person name="Schoenbach C."/>
            <person name="Sekiguchi K."/>
            <person name="Semple C.A."/>
            <person name="Seno S."/>
            <person name="Sessa L."/>
            <person name="Sheng Y."/>
            <person name="Shibata Y."/>
            <person name="Shimada H."/>
            <person name="Shimada K."/>
            <person name="Silva D."/>
            <person name="Sinclair B."/>
            <person name="Sperling S."/>
            <person name="Stupka E."/>
            <person name="Sugiura K."/>
            <person name="Sultana R."/>
            <person name="Takenaka Y."/>
            <person name="Taki K."/>
            <person name="Tammoja K."/>
            <person name="Tan S.L."/>
            <person name="Tang S."/>
            <person name="Taylor M.S."/>
            <person name="Tegner J."/>
            <person name="Teichmann S.A."/>
            <person name="Ueda H.R."/>
            <person name="van Nimwegen E."/>
            <person name="Verardo R."/>
            <person name="Wei C.L."/>
            <person name="Yagi K."/>
            <person name="Yamanishi H."/>
            <person name="Zabarovsky E."/>
            <person name="Zhu S."/>
            <person name="Zimmer A."/>
            <person name="Hide W."/>
            <person name="Bult C."/>
            <person name="Grimmond S.M."/>
            <person name="Teasdale R.D."/>
            <person name="Liu E.T."/>
            <person name="Brusic V."/>
            <person name="Quackenbush J."/>
            <person name="Wahlestedt C."/>
            <person name="Mattick J.S."/>
            <person name="Hume D.A."/>
            <person name="Kai C."/>
            <person name="Sasaki D."/>
            <person name="Tomaru Y."/>
            <person name="Fukuda S."/>
            <person name="Kanamori-Katayama M."/>
            <person name="Suzuki M."/>
            <person name="Aoki J."/>
            <person name="Arakawa T."/>
            <person name="Iida J."/>
            <person name="Imamura K."/>
            <person name="Itoh M."/>
            <person name="Kato T."/>
            <person name="Kawaji H."/>
            <person name="Kawagashira N."/>
            <person name="Kawashima T."/>
            <person name="Kojima M."/>
            <person name="Kondo S."/>
            <person name="Konno H."/>
            <person name="Nakano K."/>
            <person name="Ninomiya N."/>
            <person name="Nishio T."/>
            <person name="Okada M."/>
            <person name="Plessy C."/>
            <person name="Shibata K."/>
            <person name="Shiraki T."/>
            <person name="Suzuki S."/>
            <person name="Tagami M."/>
            <person name="Waki K."/>
            <person name="Watahiki A."/>
            <person name="Okamura-Oho Y."/>
            <person name="Suzuki H."/>
            <person name="Kawai J."/>
            <person name="Hayashizaki Y."/>
        </authorList>
    </citation>
    <scope>NUCLEOTIDE SEQUENCE [LARGE SCALE MRNA] (ISOFORM 1)</scope>
    <source>
        <strain>C57BL/6J</strain>
        <tissue>Extraembryonic tissue</tissue>
        <tissue>Placenta</tissue>
        <tissue>Urinary bladder</tissue>
    </source>
</reference>
<reference key="3">
    <citation type="journal article" date="2009" name="PLoS Biol.">
        <title>Lineage-specific biology revealed by a finished genome assembly of the mouse.</title>
        <authorList>
            <person name="Church D.M."/>
            <person name="Goodstadt L."/>
            <person name="Hillier L.W."/>
            <person name="Zody M.C."/>
            <person name="Goldstein S."/>
            <person name="She X."/>
            <person name="Bult C.J."/>
            <person name="Agarwala R."/>
            <person name="Cherry J.L."/>
            <person name="DiCuccio M."/>
            <person name="Hlavina W."/>
            <person name="Kapustin Y."/>
            <person name="Meric P."/>
            <person name="Maglott D."/>
            <person name="Birtle Z."/>
            <person name="Marques A.C."/>
            <person name="Graves T."/>
            <person name="Zhou S."/>
            <person name="Teague B."/>
            <person name="Potamousis K."/>
            <person name="Churas C."/>
            <person name="Place M."/>
            <person name="Herschleb J."/>
            <person name="Runnheim R."/>
            <person name="Forrest D."/>
            <person name="Amos-Landgraf J."/>
            <person name="Schwartz D.C."/>
            <person name="Cheng Z."/>
            <person name="Lindblad-Toh K."/>
            <person name="Eichler E.E."/>
            <person name="Ponting C.P."/>
        </authorList>
    </citation>
    <scope>NUCLEOTIDE SEQUENCE [LARGE SCALE GENOMIC DNA]</scope>
    <scope>ALTERNATIVE SPLICING</scope>
    <source>
        <strain>C57BL/6J</strain>
    </source>
</reference>
<reference key="4">
    <citation type="journal article" date="2004" name="Genome Res.">
        <title>The status, quality, and expansion of the NIH full-length cDNA project: the Mammalian Gene Collection (MGC).</title>
        <authorList>
            <consortium name="The MGC Project Team"/>
        </authorList>
    </citation>
    <scope>NUCLEOTIDE SEQUENCE [LARGE SCALE MRNA] OF 145-473 (ISOFORM 1)</scope>
    <source>
        <strain>Czech II</strain>
        <tissue>Mammary gland</tissue>
    </source>
</reference>
<reference key="5">
    <citation type="journal article" date="2003" name="Biochem. Biophys. Res. Commun.">
        <title>Characterization of zetin 1/rBSPRY, a novel binding partner of 14-3-3 proteins.</title>
        <authorList>
            <person name="Birkenfeld J."/>
            <person name="Kartmann B."/>
            <person name="Anliker B."/>
            <person name="Ono K."/>
            <person name="Schloetcke B."/>
            <person name="Betz H."/>
            <person name="Roth D."/>
        </authorList>
    </citation>
    <scope>DEVELOPMENTAL STAGE</scope>
</reference>
<reference key="6">
    <citation type="journal article" date="2006" name="J. Am. Soc. Nephrol.">
        <title>Identification of BSPRY as a novel auxiliary protein inhibiting TRPV5 activity.</title>
        <authorList>
            <person name="van de Graaf S.F.J."/>
            <person name="van der Kemp A.W.C.M."/>
            <person name="van den Berg D."/>
            <person name="van Oorschot M."/>
            <person name="Hoenderop J.G.J."/>
            <person name="Bindels R.J.M."/>
        </authorList>
    </citation>
    <scope>INTERACTION WITH TRPV5 AND TRPV6</scope>
    <scope>TISSUE SPECIFICITY</scope>
    <scope>FUNCTION</scope>
    <scope>SUBCELLULAR LOCATION</scope>
    <scope>INDUCTION</scope>
</reference>
<reference key="7">
    <citation type="journal article" date="2010" name="Cell">
        <title>A tissue-specific atlas of mouse protein phosphorylation and expression.</title>
        <authorList>
            <person name="Huttlin E.L."/>
            <person name="Jedrychowski M.P."/>
            <person name="Elias J.E."/>
            <person name="Goswami T."/>
            <person name="Rad R."/>
            <person name="Beausoleil S.A."/>
            <person name="Villen J."/>
            <person name="Haas W."/>
            <person name="Sowa M.E."/>
            <person name="Gygi S.P."/>
        </authorList>
    </citation>
    <scope>IDENTIFICATION BY MASS SPECTROMETRY [LARGE SCALE ANALYSIS]</scope>
    <source>
        <tissue>Testis</tissue>
    </source>
</reference>
<evidence type="ECO:0000250" key="1"/>
<evidence type="ECO:0000255" key="2">
    <source>
        <dbReference type="PROSITE-ProRule" id="PRU00548"/>
    </source>
</evidence>
<evidence type="ECO:0000256" key="3">
    <source>
        <dbReference type="SAM" id="MobiDB-lite"/>
    </source>
</evidence>
<evidence type="ECO:0000269" key="4">
    <source>
    </source>
</evidence>
<evidence type="ECO:0000269" key="5">
    <source>
    </source>
</evidence>
<evidence type="ECO:0000269" key="6">
    <source>
    </source>
</evidence>
<evidence type="ECO:0000303" key="7">
    <source>
    </source>
</evidence>
<evidence type="ECO:0000305" key="8"/>
<protein>
    <recommendedName>
        <fullName>B box and SPRY domain-containing protein</fullName>
    </recommendedName>
</protein>
<name>BSPRY_MOUSE</name>
<gene>
    <name type="primary">Bspry</name>
</gene>
<keyword id="KW-0025">Alternative splicing</keyword>
<keyword id="KW-0106">Calcium</keyword>
<keyword id="KW-0109">Calcium transport</keyword>
<keyword id="KW-0963">Cytoplasm</keyword>
<keyword id="KW-0406">Ion transport</keyword>
<keyword id="KW-0472">Membrane</keyword>
<keyword id="KW-0479">Metal-binding</keyword>
<keyword id="KW-1185">Reference proteome</keyword>
<keyword id="KW-0813">Transport</keyword>
<keyword id="KW-0848">Vitamin D</keyword>
<keyword id="KW-0862">Zinc</keyword>
<keyword id="KW-0863">Zinc-finger</keyword>
<accession>Q80YW5</accession>
<accession>Q3TU74</accession>
<accession>Q8BZF0</accession>
<accession>Q99KV7</accession>
<accession>Q9ER70</accession>
<proteinExistence type="evidence at protein level"/>
<feature type="chain" id="PRO_0000244258" description="B box and SPRY domain-containing protein">
    <location>
        <begin position="1"/>
        <end position="473"/>
    </location>
</feature>
<feature type="domain" description="B30.2/SPRY" evidence="2">
    <location>
        <begin position="259"/>
        <end position="455"/>
    </location>
</feature>
<feature type="zinc finger region" description="B box-type">
    <location>
        <begin position="65"/>
        <end position="113"/>
    </location>
</feature>
<feature type="region of interest" description="Disordered" evidence="3">
    <location>
        <begin position="1"/>
        <end position="69"/>
    </location>
</feature>
<feature type="compositionally biased region" description="Pro residues" evidence="3">
    <location>
        <begin position="35"/>
        <end position="51"/>
    </location>
</feature>
<feature type="splice variant" id="VSP_019529" description="In isoform 2." evidence="7">
    <original>RSGHASR</original>
    <variation>SIRRTTCQDTVGQNVVVGVW</variation>
    <location>
        <begin position="467"/>
        <end position="473"/>
    </location>
</feature>
<feature type="sequence conflict" description="In Ref. 2; BAC29115." evidence="8" ref="2">
    <original>E</original>
    <variation>F</variation>
    <location>
        <position position="17"/>
    </location>
</feature>
<feature type="sequence conflict" description="In Ref. 2; BAE36097." evidence="8" ref="2">
    <original>A</original>
    <variation>D</variation>
    <location>
        <position position="137"/>
    </location>
</feature>
<feature type="sequence conflict" description="In Ref. 2; BAE36097." evidence="8" ref="2">
    <original>C</original>
    <variation>S</variation>
    <location>
        <position position="169"/>
    </location>
</feature>